<evidence type="ECO:0000255" key="1">
    <source>
        <dbReference type="HAMAP-Rule" id="MF_01308"/>
    </source>
</evidence>
<evidence type="ECO:0000305" key="2"/>
<name>CEMA_MARPO</name>
<accession>P12211</accession>
<comment type="function">
    <text evidence="1">Contributes to K(+)/H(+) antiport activity by supporting proton efflux to control proton extrusion and homeostasis in chloroplasts in a light-dependent manner to modulate photosynthesis. Prevents excessive induction of non-photochemical quenching (NPQ) under continuous-light conditions. Indirectly promotes efficient inorganic carbon uptake into chloroplasts.</text>
</comment>
<comment type="catalytic activity">
    <reaction evidence="1">
        <text>K(+)(in) + H(+)(out) = K(+)(out) + H(+)(in)</text>
        <dbReference type="Rhea" id="RHEA:29467"/>
        <dbReference type="ChEBI" id="CHEBI:15378"/>
        <dbReference type="ChEBI" id="CHEBI:29103"/>
    </reaction>
</comment>
<comment type="subcellular location">
    <subcellularLocation>
        <location evidence="1">Plastid</location>
        <location evidence="1">Chloroplast inner membrane</location>
        <topology evidence="1">Multi-pass membrane protein</topology>
    </subcellularLocation>
</comment>
<comment type="similarity">
    <text evidence="1 2">Belongs to the CemA family.</text>
</comment>
<feature type="chain" id="PRO_0000216647" description="Potassium/proton antiporter CemA">
    <location>
        <begin position="1"/>
        <end position="434"/>
    </location>
</feature>
<feature type="transmembrane region" description="Helical" evidence="1">
    <location>
        <begin position="75"/>
        <end position="95"/>
    </location>
</feature>
<feature type="transmembrane region" description="Helical" evidence="1">
    <location>
        <begin position="210"/>
        <end position="230"/>
    </location>
</feature>
<feature type="transmembrane region" description="Helical" evidence="1">
    <location>
        <begin position="311"/>
        <end position="331"/>
    </location>
</feature>
<feature type="transmembrane region" description="Helical" evidence="1">
    <location>
        <begin position="359"/>
        <end position="379"/>
    </location>
</feature>
<feature type="transmembrane region" description="Helical" evidence="1">
    <location>
        <begin position="395"/>
        <end position="415"/>
    </location>
</feature>
<keyword id="KW-0050">Antiport</keyword>
<keyword id="KW-0150">Chloroplast</keyword>
<keyword id="KW-0375">Hydrogen ion transport</keyword>
<keyword id="KW-0406">Ion transport</keyword>
<keyword id="KW-0472">Membrane</keyword>
<keyword id="KW-0934">Plastid</keyword>
<keyword id="KW-1001">Plastid inner membrane</keyword>
<keyword id="KW-0630">Potassium</keyword>
<keyword id="KW-0633">Potassium transport</keyword>
<keyword id="KW-0812">Transmembrane</keyword>
<keyword id="KW-1133">Transmembrane helix</keyword>
<keyword id="KW-0813">Transport</keyword>
<sequence length="434" mass="51867">MKKNFSYWRIFHHIFALPYCSLEKAYKASKRIQKIKKDYFLYKNILFSSKRSWQSILFYIDTELNNSVFKIYLSLLEYKLSLWLIQLFLIFSLFFKKNSKFDLILPNINEKKKKRKINRKLAWIRATLNDLESWRRYYLFSSFLSLDKKEKNNFSFLQMKSSRLTAIAYESIGLVPRSITRTFSRFKAELTNQSSSLVLKEFRLAKYQALASLQYIGCLFFIPLGVSFFFQKCFLEPWIQNWWNIYQSQIFLTSFQEEKALKKLQEIEELFWLDKVMTYSSNKIQLQDLTKEIHQQTIELVQIYNNDSIKIVLHLLTDLIWFITLSCLFILGKERLVILNSWAQELFYSLSDTMKAFFILLLTDLCIGFHSPHGWEIVISSCLEHFGFVHNKHVISCFVSTFPVILDTVFKYLIFRHLNRISPSIVATYHTMNE</sequence>
<proteinExistence type="inferred from homology"/>
<geneLocation type="chloroplast"/>
<dbReference type="EMBL" id="X04465">
    <property type="protein sequence ID" value="CAA28096.1"/>
    <property type="molecule type" value="Genomic_DNA"/>
</dbReference>
<dbReference type="PIR" id="S01533">
    <property type="entry name" value="A05046"/>
</dbReference>
<dbReference type="RefSeq" id="NP_039310.1">
    <property type="nucleotide sequence ID" value="NC_001319.1"/>
</dbReference>
<dbReference type="GeneID" id="2702599"/>
<dbReference type="GO" id="GO:0009706">
    <property type="term" value="C:chloroplast inner membrane"/>
    <property type="evidence" value="ECO:0007669"/>
    <property type="project" value="UniProtKB-SubCell"/>
</dbReference>
<dbReference type="GO" id="GO:0015297">
    <property type="term" value="F:antiporter activity"/>
    <property type="evidence" value="ECO:0007669"/>
    <property type="project" value="UniProtKB-KW"/>
</dbReference>
<dbReference type="GO" id="GO:0015078">
    <property type="term" value="F:proton transmembrane transporter activity"/>
    <property type="evidence" value="ECO:0007669"/>
    <property type="project" value="UniProtKB-UniRule"/>
</dbReference>
<dbReference type="GO" id="GO:0006813">
    <property type="term" value="P:potassium ion transport"/>
    <property type="evidence" value="ECO:0007669"/>
    <property type="project" value="UniProtKB-UniRule"/>
</dbReference>
<dbReference type="HAMAP" id="MF_01308">
    <property type="entry name" value="CemA_PxcA"/>
    <property type="match status" value="1"/>
</dbReference>
<dbReference type="InterPro" id="IPR004282">
    <property type="entry name" value="CemA"/>
</dbReference>
<dbReference type="PANTHER" id="PTHR33650:SF2">
    <property type="entry name" value="CHLOROPLAST ENVELOPE MEMBRANE PROTEIN"/>
    <property type="match status" value="1"/>
</dbReference>
<dbReference type="PANTHER" id="PTHR33650">
    <property type="entry name" value="CHLOROPLAST ENVELOPE MEMBRANE PROTEIN-RELATED"/>
    <property type="match status" value="1"/>
</dbReference>
<dbReference type="Pfam" id="PF03040">
    <property type="entry name" value="CemA"/>
    <property type="match status" value="1"/>
</dbReference>
<organism>
    <name type="scientific">Marchantia polymorpha</name>
    <name type="common">Common liverwort</name>
    <name type="synonym">Marchantia aquatica</name>
    <dbReference type="NCBI Taxonomy" id="3197"/>
    <lineage>
        <taxon>Eukaryota</taxon>
        <taxon>Viridiplantae</taxon>
        <taxon>Streptophyta</taxon>
        <taxon>Embryophyta</taxon>
        <taxon>Marchantiophyta</taxon>
        <taxon>Marchantiopsida</taxon>
        <taxon>Marchantiidae</taxon>
        <taxon>Marchantiales</taxon>
        <taxon>Marchantiaceae</taxon>
        <taxon>Marchantia</taxon>
    </lineage>
</organism>
<protein>
    <recommendedName>
        <fullName evidence="1">Potassium/proton antiporter CemA</fullName>
    </recommendedName>
    <alternativeName>
        <fullName evidence="1">Chloroplast envelope membrane protein A</fullName>
        <shortName evidence="1">CemA</shortName>
    </alternativeName>
</protein>
<reference key="1">
    <citation type="journal article" date="1988" name="J. Mol. Biol.">
        <title>Structure and organization of Marchantia polymorpha chloroplast genome. III. Gene organization of the large single copy region from rbcL to trnI(CAU).</title>
        <authorList>
            <person name="Fukuzawa H."/>
            <person name="Kohchi T."/>
            <person name="Sano T."/>
            <person name="Shirai H."/>
            <person name="Umesono K."/>
            <person name="Inokuchi H."/>
            <person name="Ozeki H."/>
            <person name="Ohyama K."/>
        </authorList>
    </citation>
    <scope>NUCLEOTIDE SEQUENCE [GENOMIC DNA]</scope>
</reference>
<reference key="2">
    <citation type="journal article" date="1986" name="Nature">
        <title>Chloroplast gene organization deduced from complete sequence of liverwort Marchantia polymorpha chloroplast DNA.</title>
        <authorList>
            <person name="Ohyama K."/>
            <person name="Fukuzawa H."/>
            <person name="Kohchi T."/>
            <person name="Shirai H."/>
            <person name="Sano T."/>
            <person name="Sano S."/>
            <person name="Umesono K."/>
            <person name="Shiki Y."/>
            <person name="Takeuchi M."/>
            <person name="Chang Z."/>
            <person name="Aota S."/>
            <person name="Inokuchi H."/>
            <person name="Ozeki H."/>
        </authorList>
    </citation>
    <scope>NUCLEOTIDE SEQUENCE [LARGE SCALE GENOMIC DNA]</scope>
</reference>
<gene>
    <name evidence="1" type="primary">cemA</name>
    <name type="synonym">ycf10</name>
</gene>